<evidence type="ECO:0000255" key="1">
    <source>
        <dbReference type="HAMAP-Rule" id="MF_01346"/>
    </source>
</evidence>
<sequence>MSENIKPSEVSEVLLQQLKGIDTHLQFDEVGNVLQVSDGVARIYGLRNAEANELLEFENGIMAIVMNLEEDNVGAVLLGPTDQIKEGMVVKRTKRIASINVGEGMLGRVIDPLGVPLDGRGQIGGELCEMPLERKAPGVIFRQPVNQPLQTGLKSVDAMIPIGRGQRELIIGDRQTGKTSIAIDTILNQKSNYEAGKPVYCIYVAIGQKGSTVASLVNTLRERGAMDYTIVVAATAADPAALQYFAPFAGAAIGEYFRDTGRDALVVYDDLSKQAVAYREVSLILRRPSGREAYPGDIFYLHSRLLERAAKIINQQEVAEQMNDLPPSLKGKVKAGGSLTALPIIETQAGDVSAYIPTNVISITDGQIFLETDLFNQGFRPAINVGISVSRVGGSAQIKSMKKVAGTLKIDQAQYRELEAFSKFSSDMDPVTAMAIDRGRKNNQLLIQPQYSPMPVGEQIAILYCGTHSLLRDVPLHKVQDFQKSFLEMMRADHQKDVLDVLSSGVINDDVTAIIEKVAADTAQPFKVNE</sequence>
<feature type="chain" id="PRO_0000302627" description="ATP synthase subunit alpha">
    <location>
        <begin position="1"/>
        <end position="530"/>
    </location>
</feature>
<feature type="binding site" evidence="1">
    <location>
        <begin position="172"/>
        <end position="179"/>
    </location>
    <ligand>
        <name>ATP</name>
        <dbReference type="ChEBI" id="CHEBI:30616"/>
    </ligand>
</feature>
<feature type="site" description="Required for activity" evidence="1">
    <location>
        <position position="388"/>
    </location>
</feature>
<gene>
    <name evidence="1" type="primary">atpA</name>
    <name type="ordered locus">BVU_3000</name>
</gene>
<accession>A6L4M4</accession>
<dbReference type="EC" id="7.1.2.2" evidence="1"/>
<dbReference type="EMBL" id="CP000139">
    <property type="protein sequence ID" value="ABR40638.1"/>
    <property type="molecule type" value="Genomic_DNA"/>
</dbReference>
<dbReference type="RefSeq" id="WP_005846835.1">
    <property type="nucleotide sequence ID" value="NZ_JANSWM010000059.1"/>
</dbReference>
<dbReference type="SMR" id="A6L4M4"/>
<dbReference type="STRING" id="435590.BVU_3000"/>
<dbReference type="PaxDb" id="435590-BVU_3000"/>
<dbReference type="GeneID" id="5303961"/>
<dbReference type="KEGG" id="bvu:BVU_3000"/>
<dbReference type="eggNOG" id="COG0056">
    <property type="taxonomic scope" value="Bacteria"/>
</dbReference>
<dbReference type="HOGENOM" id="CLU_010091_2_1_10"/>
<dbReference type="BioCyc" id="BVUL435590:G1G59-3123-MONOMER"/>
<dbReference type="Proteomes" id="UP000002861">
    <property type="component" value="Chromosome"/>
</dbReference>
<dbReference type="GO" id="GO:0005886">
    <property type="term" value="C:plasma membrane"/>
    <property type="evidence" value="ECO:0007669"/>
    <property type="project" value="UniProtKB-SubCell"/>
</dbReference>
<dbReference type="GO" id="GO:0045259">
    <property type="term" value="C:proton-transporting ATP synthase complex"/>
    <property type="evidence" value="ECO:0007669"/>
    <property type="project" value="UniProtKB-KW"/>
</dbReference>
<dbReference type="GO" id="GO:0043531">
    <property type="term" value="F:ADP binding"/>
    <property type="evidence" value="ECO:0007669"/>
    <property type="project" value="TreeGrafter"/>
</dbReference>
<dbReference type="GO" id="GO:0005524">
    <property type="term" value="F:ATP binding"/>
    <property type="evidence" value="ECO:0007669"/>
    <property type="project" value="UniProtKB-UniRule"/>
</dbReference>
<dbReference type="GO" id="GO:0046933">
    <property type="term" value="F:proton-transporting ATP synthase activity, rotational mechanism"/>
    <property type="evidence" value="ECO:0007669"/>
    <property type="project" value="UniProtKB-UniRule"/>
</dbReference>
<dbReference type="CDD" id="cd18113">
    <property type="entry name" value="ATP-synt_F1_alpha_C"/>
    <property type="match status" value="1"/>
</dbReference>
<dbReference type="CDD" id="cd18116">
    <property type="entry name" value="ATP-synt_F1_alpha_N"/>
    <property type="match status" value="1"/>
</dbReference>
<dbReference type="CDD" id="cd01132">
    <property type="entry name" value="F1-ATPase_alpha_CD"/>
    <property type="match status" value="1"/>
</dbReference>
<dbReference type="FunFam" id="1.20.150.20:FF:000001">
    <property type="entry name" value="ATP synthase subunit alpha"/>
    <property type="match status" value="1"/>
</dbReference>
<dbReference type="FunFam" id="2.40.30.20:FF:000001">
    <property type="entry name" value="ATP synthase subunit alpha"/>
    <property type="match status" value="1"/>
</dbReference>
<dbReference type="FunFam" id="3.40.50.300:FF:000002">
    <property type="entry name" value="ATP synthase subunit alpha"/>
    <property type="match status" value="1"/>
</dbReference>
<dbReference type="Gene3D" id="2.40.30.20">
    <property type="match status" value="1"/>
</dbReference>
<dbReference type="Gene3D" id="1.20.150.20">
    <property type="entry name" value="ATP synthase alpha/beta chain, C-terminal domain"/>
    <property type="match status" value="1"/>
</dbReference>
<dbReference type="Gene3D" id="3.40.50.300">
    <property type="entry name" value="P-loop containing nucleotide triphosphate hydrolases"/>
    <property type="match status" value="1"/>
</dbReference>
<dbReference type="HAMAP" id="MF_01346">
    <property type="entry name" value="ATP_synth_alpha_bact"/>
    <property type="match status" value="1"/>
</dbReference>
<dbReference type="InterPro" id="IPR023366">
    <property type="entry name" value="ATP_synth_asu-like_sf"/>
</dbReference>
<dbReference type="InterPro" id="IPR000793">
    <property type="entry name" value="ATP_synth_asu_C"/>
</dbReference>
<dbReference type="InterPro" id="IPR038376">
    <property type="entry name" value="ATP_synth_asu_C_sf"/>
</dbReference>
<dbReference type="InterPro" id="IPR033732">
    <property type="entry name" value="ATP_synth_F1_a_nt-bd_dom"/>
</dbReference>
<dbReference type="InterPro" id="IPR005294">
    <property type="entry name" value="ATP_synth_F1_asu"/>
</dbReference>
<dbReference type="InterPro" id="IPR020003">
    <property type="entry name" value="ATPase_a/bsu_AS"/>
</dbReference>
<dbReference type="InterPro" id="IPR004100">
    <property type="entry name" value="ATPase_F1/V1/A1_a/bsu_N"/>
</dbReference>
<dbReference type="InterPro" id="IPR036121">
    <property type="entry name" value="ATPase_F1/V1/A1_a/bsu_N_sf"/>
</dbReference>
<dbReference type="InterPro" id="IPR000194">
    <property type="entry name" value="ATPase_F1/V1/A1_a/bsu_nucl-bd"/>
</dbReference>
<dbReference type="InterPro" id="IPR027417">
    <property type="entry name" value="P-loop_NTPase"/>
</dbReference>
<dbReference type="NCBIfam" id="TIGR00962">
    <property type="entry name" value="atpA"/>
    <property type="match status" value="1"/>
</dbReference>
<dbReference type="NCBIfam" id="NF009884">
    <property type="entry name" value="PRK13343.1"/>
    <property type="match status" value="1"/>
</dbReference>
<dbReference type="PANTHER" id="PTHR48082">
    <property type="entry name" value="ATP SYNTHASE SUBUNIT ALPHA, MITOCHONDRIAL"/>
    <property type="match status" value="1"/>
</dbReference>
<dbReference type="PANTHER" id="PTHR48082:SF2">
    <property type="entry name" value="ATP SYNTHASE SUBUNIT ALPHA, MITOCHONDRIAL"/>
    <property type="match status" value="1"/>
</dbReference>
<dbReference type="Pfam" id="PF00006">
    <property type="entry name" value="ATP-synt_ab"/>
    <property type="match status" value="1"/>
</dbReference>
<dbReference type="Pfam" id="PF00306">
    <property type="entry name" value="ATP-synt_ab_C"/>
    <property type="match status" value="1"/>
</dbReference>
<dbReference type="Pfam" id="PF02874">
    <property type="entry name" value="ATP-synt_ab_N"/>
    <property type="match status" value="1"/>
</dbReference>
<dbReference type="SUPFAM" id="SSF47917">
    <property type="entry name" value="C-terminal domain of alpha and beta subunits of F1 ATP synthase"/>
    <property type="match status" value="1"/>
</dbReference>
<dbReference type="SUPFAM" id="SSF50615">
    <property type="entry name" value="N-terminal domain of alpha and beta subunits of F1 ATP synthase"/>
    <property type="match status" value="1"/>
</dbReference>
<dbReference type="SUPFAM" id="SSF52540">
    <property type="entry name" value="P-loop containing nucleoside triphosphate hydrolases"/>
    <property type="match status" value="1"/>
</dbReference>
<dbReference type="PROSITE" id="PS00152">
    <property type="entry name" value="ATPASE_ALPHA_BETA"/>
    <property type="match status" value="1"/>
</dbReference>
<proteinExistence type="inferred from homology"/>
<name>ATPA_PHOV8</name>
<comment type="function">
    <text evidence="1">Produces ATP from ADP in the presence of a proton gradient across the membrane. The alpha chain is a regulatory subunit.</text>
</comment>
<comment type="catalytic activity">
    <reaction evidence="1">
        <text>ATP + H2O + 4 H(+)(in) = ADP + phosphate + 5 H(+)(out)</text>
        <dbReference type="Rhea" id="RHEA:57720"/>
        <dbReference type="ChEBI" id="CHEBI:15377"/>
        <dbReference type="ChEBI" id="CHEBI:15378"/>
        <dbReference type="ChEBI" id="CHEBI:30616"/>
        <dbReference type="ChEBI" id="CHEBI:43474"/>
        <dbReference type="ChEBI" id="CHEBI:456216"/>
        <dbReference type="EC" id="7.1.2.2"/>
    </reaction>
</comment>
<comment type="subunit">
    <text evidence="1">F-type ATPases have 2 components, CF(1) - the catalytic core - and CF(0) - the membrane proton channel. CF(1) has five subunits: alpha(3), beta(3), gamma(1), delta(1), epsilon(1). CF(0) has three main subunits: a(1), b(2) and c(9-12). The alpha and beta chains form an alternating ring which encloses part of the gamma chain. CF(1) is attached to CF(0) by a central stalk formed by the gamma and epsilon chains, while a peripheral stalk is formed by the delta and b chains.</text>
</comment>
<comment type="subcellular location">
    <subcellularLocation>
        <location evidence="1">Cell inner membrane</location>
        <topology evidence="1">Peripheral membrane protein</topology>
    </subcellularLocation>
</comment>
<comment type="similarity">
    <text evidence="1">Belongs to the ATPase alpha/beta chains family.</text>
</comment>
<protein>
    <recommendedName>
        <fullName evidence="1">ATP synthase subunit alpha</fullName>
        <ecNumber evidence="1">7.1.2.2</ecNumber>
    </recommendedName>
    <alternativeName>
        <fullName evidence="1">ATP synthase F1 sector subunit alpha</fullName>
    </alternativeName>
    <alternativeName>
        <fullName evidence="1">F-ATPase subunit alpha</fullName>
    </alternativeName>
</protein>
<keyword id="KW-0066">ATP synthesis</keyword>
<keyword id="KW-0067">ATP-binding</keyword>
<keyword id="KW-0997">Cell inner membrane</keyword>
<keyword id="KW-1003">Cell membrane</keyword>
<keyword id="KW-0139">CF(1)</keyword>
<keyword id="KW-0375">Hydrogen ion transport</keyword>
<keyword id="KW-0406">Ion transport</keyword>
<keyword id="KW-0472">Membrane</keyword>
<keyword id="KW-0547">Nucleotide-binding</keyword>
<keyword id="KW-1278">Translocase</keyword>
<keyword id="KW-0813">Transport</keyword>
<organism>
    <name type="scientific">Phocaeicola vulgatus (strain ATCC 8482 / DSM 1447 / JCM 5826 / CCUG 4940 / NBRC 14291 / NCTC 11154)</name>
    <name type="common">Bacteroides vulgatus</name>
    <dbReference type="NCBI Taxonomy" id="435590"/>
    <lineage>
        <taxon>Bacteria</taxon>
        <taxon>Pseudomonadati</taxon>
        <taxon>Bacteroidota</taxon>
        <taxon>Bacteroidia</taxon>
        <taxon>Bacteroidales</taxon>
        <taxon>Bacteroidaceae</taxon>
        <taxon>Phocaeicola</taxon>
    </lineage>
</organism>
<reference key="1">
    <citation type="journal article" date="2007" name="PLoS Biol.">
        <title>Evolution of symbiotic bacteria in the distal human intestine.</title>
        <authorList>
            <person name="Xu J."/>
            <person name="Mahowald M.A."/>
            <person name="Ley R.E."/>
            <person name="Lozupone C.A."/>
            <person name="Hamady M."/>
            <person name="Martens E.C."/>
            <person name="Henrissat B."/>
            <person name="Coutinho P.M."/>
            <person name="Minx P."/>
            <person name="Latreille P."/>
            <person name="Cordum H."/>
            <person name="Van Brunt A."/>
            <person name="Kim K."/>
            <person name="Fulton R.S."/>
            <person name="Fulton L.A."/>
            <person name="Clifton S.W."/>
            <person name="Wilson R.K."/>
            <person name="Knight R.D."/>
            <person name="Gordon J.I."/>
        </authorList>
    </citation>
    <scope>NUCLEOTIDE SEQUENCE [LARGE SCALE GENOMIC DNA]</scope>
    <source>
        <strain>ATCC 8482 / DSM 1447 / JCM 5826 / CCUG 4940 / NBRC 14291 / NCTC 11154</strain>
    </source>
</reference>